<accession>B5XY75</accession>
<gene>
    <name evidence="1" type="primary">mukF</name>
    <name type="ordered locus">KPK_3610</name>
</gene>
<keyword id="KW-0106">Calcium</keyword>
<keyword id="KW-0131">Cell cycle</keyword>
<keyword id="KW-0132">Cell division</keyword>
<keyword id="KW-0159">Chromosome partition</keyword>
<keyword id="KW-0963">Cytoplasm</keyword>
<keyword id="KW-0226">DNA condensation</keyword>
<proteinExistence type="inferred from homology"/>
<sequence>MSEFSQTVPELVAWARKNDFSISLPVDRLSFLLAVATLNGERLEGEMSEGELVDAFRHVSDAFEQTSETISQRANNAINDLVRQRLLNRFTSEITEGNAIYRLTPLGIGITDYYIRQREFSTLRLSMQLSIVASELKRAADAAEEGGDEFHWHRNVFAPLKYSVAEIFDSIDLTQRIMDEQQQLVKDDIAQLLNKDWRAAISSCELLLSETSGTLRELQDTLDAAGDKLQANLLRIQDSTMARDDLHFVDRLVFDLQSKLDRIVSWGQQAIDLWIGYDRHVHKFIRTAIDMDKNRVFAQRLRQSVQTYFDEPWALTYANADRLLDMRDEEMALRDEEVTGELPADLEFEEFNEIREQLAALIEAQLAVYKEKGIPLDLGLVAREFLAQYPRGRHFDVARIVVDQAVQLGVAQADFTGLPAKWQPINDYGAKVQAHVIDKY</sequence>
<name>MUKF_KLEP3</name>
<evidence type="ECO:0000255" key="1">
    <source>
        <dbReference type="HAMAP-Rule" id="MF_01803"/>
    </source>
</evidence>
<comment type="function">
    <text evidence="1">Involved in chromosome condensation, segregation and cell cycle progression. May participate in facilitating chromosome segregation by condensation DNA from both sides of a centrally located replisome during cell division. Not required for mini-F plasmid partitioning. Probably acts via its interaction with MukB and MukE. Overexpression results in anucleate cells. It has a calcium binding activity.</text>
</comment>
<comment type="subunit">
    <text evidence="1">Interacts, and probably forms a ternary complex, with MukE and MukB via its C-terminal region. The complex formation is stimulated by calcium or magnesium. It is required for an interaction between MukE and MukB.</text>
</comment>
<comment type="subcellular location">
    <subcellularLocation>
        <location evidence="1">Cytoplasm</location>
        <location evidence="1">Nucleoid</location>
    </subcellularLocation>
    <text evidence="1">Restricted to the nucleoid region.</text>
</comment>
<comment type="similarity">
    <text evidence="1">Belongs to the MukF family.</text>
</comment>
<dbReference type="EMBL" id="CP000964">
    <property type="protein sequence ID" value="ACI09820.1"/>
    <property type="molecule type" value="Genomic_DNA"/>
</dbReference>
<dbReference type="SMR" id="B5XY75"/>
<dbReference type="KEGG" id="kpe:KPK_3610"/>
<dbReference type="HOGENOM" id="CLU_049853_0_0_6"/>
<dbReference type="Proteomes" id="UP000001734">
    <property type="component" value="Chromosome"/>
</dbReference>
<dbReference type="GO" id="GO:0005737">
    <property type="term" value="C:cytoplasm"/>
    <property type="evidence" value="ECO:0007669"/>
    <property type="project" value="UniProtKB-UniRule"/>
</dbReference>
<dbReference type="GO" id="GO:0009295">
    <property type="term" value="C:nucleoid"/>
    <property type="evidence" value="ECO:0007669"/>
    <property type="project" value="UniProtKB-SubCell"/>
</dbReference>
<dbReference type="GO" id="GO:0005509">
    <property type="term" value="F:calcium ion binding"/>
    <property type="evidence" value="ECO:0007669"/>
    <property type="project" value="UniProtKB-UniRule"/>
</dbReference>
<dbReference type="GO" id="GO:0051301">
    <property type="term" value="P:cell division"/>
    <property type="evidence" value="ECO:0007669"/>
    <property type="project" value="UniProtKB-KW"/>
</dbReference>
<dbReference type="GO" id="GO:0030261">
    <property type="term" value="P:chromosome condensation"/>
    <property type="evidence" value="ECO:0007669"/>
    <property type="project" value="UniProtKB-KW"/>
</dbReference>
<dbReference type="GO" id="GO:0007059">
    <property type="term" value="P:chromosome segregation"/>
    <property type="evidence" value="ECO:0007669"/>
    <property type="project" value="UniProtKB-UniRule"/>
</dbReference>
<dbReference type="GO" id="GO:0006260">
    <property type="term" value="P:DNA replication"/>
    <property type="evidence" value="ECO:0007669"/>
    <property type="project" value="UniProtKB-UniRule"/>
</dbReference>
<dbReference type="CDD" id="cd16337">
    <property type="entry name" value="MukF_C"/>
    <property type="match status" value="1"/>
</dbReference>
<dbReference type="CDD" id="cd16335">
    <property type="entry name" value="MukF_N"/>
    <property type="match status" value="1"/>
</dbReference>
<dbReference type="Gene3D" id="1.20.58.590">
    <property type="entry name" value="Chromosome partition protein MukF, middle domain"/>
    <property type="match status" value="1"/>
</dbReference>
<dbReference type="Gene3D" id="1.10.225.40">
    <property type="entry name" value="MukF, C-terminal domain"/>
    <property type="match status" value="1"/>
</dbReference>
<dbReference type="Gene3D" id="1.10.10.10">
    <property type="entry name" value="Winged helix-like DNA-binding domain superfamily/Winged helix DNA-binding domain"/>
    <property type="match status" value="1"/>
</dbReference>
<dbReference type="HAMAP" id="MF_01803">
    <property type="entry name" value="MukF"/>
    <property type="match status" value="1"/>
</dbReference>
<dbReference type="InterPro" id="IPR005582">
    <property type="entry name" value="Chromosome_partition_MukF"/>
</dbReference>
<dbReference type="InterPro" id="IPR033441">
    <property type="entry name" value="MukF_C"/>
</dbReference>
<dbReference type="InterPro" id="IPR038198">
    <property type="entry name" value="MukF_C_sf"/>
</dbReference>
<dbReference type="InterPro" id="IPR033440">
    <property type="entry name" value="MukF_M"/>
</dbReference>
<dbReference type="InterPro" id="IPR036141">
    <property type="entry name" value="MukF_M_sp"/>
</dbReference>
<dbReference type="InterPro" id="IPR033439">
    <property type="entry name" value="MukF_WHTH"/>
</dbReference>
<dbReference type="InterPro" id="IPR036388">
    <property type="entry name" value="WH-like_DNA-bd_sf"/>
</dbReference>
<dbReference type="InterPro" id="IPR036390">
    <property type="entry name" value="WH_DNA-bd_sf"/>
</dbReference>
<dbReference type="NCBIfam" id="NF003615">
    <property type="entry name" value="PRK05260.1"/>
    <property type="match status" value="1"/>
</dbReference>
<dbReference type="Pfam" id="PF03882">
    <property type="entry name" value="KicB"/>
    <property type="match status" value="1"/>
</dbReference>
<dbReference type="Pfam" id="PF17193">
    <property type="entry name" value="MukF_C"/>
    <property type="match status" value="1"/>
</dbReference>
<dbReference type="Pfam" id="PF17192">
    <property type="entry name" value="MukF_M"/>
    <property type="match status" value="1"/>
</dbReference>
<dbReference type="PIRSF" id="PIRSF018282">
    <property type="entry name" value="MukF"/>
    <property type="match status" value="1"/>
</dbReference>
<dbReference type="SUPFAM" id="SSF140570">
    <property type="entry name" value="MukF C-terminal domain-like"/>
    <property type="match status" value="1"/>
</dbReference>
<dbReference type="SUPFAM" id="SSF46785">
    <property type="entry name" value="Winged helix' DNA-binding domain"/>
    <property type="match status" value="1"/>
</dbReference>
<reference key="1">
    <citation type="journal article" date="2008" name="PLoS Genet.">
        <title>Complete genome sequence of the N2-fixing broad host range endophyte Klebsiella pneumoniae 342 and virulence predictions verified in mice.</title>
        <authorList>
            <person name="Fouts D.E."/>
            <person name="Tyler H.L."/>
            <person name="DeBoy R.T."/>
            <person name="Daugherty S."/>
            <person name="Ren Q."/>
            <person name="Badger J.H."/>
            <person name="Durkin A.S."/>
            <person name="Huot H."/>
            <person name="Shrivastava S."/>
            <person name="Kothari S."/>
            <person name="Dodson R.J."/>
            <person name="Mohamoud Y."/>
            <person name="Khouri H."/>
            <person name="Roesch L.F.W."/>
            <person name="Krogfelt K.A."/>
            <person name="Struve C."/>
            <person name="Triplett E.W."/>
            <person name="Methe B.A."/>
        </authorList>
    </citation>
    <scope>NUCLEOTIDE SEQUENCE [LARGE SCALE GENOMIC DNA]</scope>
    <source>
        <strain>342</strain>
    </source>
</reference>
<organism>
    <name type="scientific">Klebsiella pneumoniae (strain 342)</name>
    <dbReference type="NCBI Taxonomy" id="507522"/>
    <lineage>
        <taxon>Bacteria</taxon>
        <taxon>Pseudomonadati</taxon>
        <taxon>Pseudomonadota</taxon>
        <taxon>Gammaproteobacteria</taxon>
        <taxon>Enterobacterales</taxon>
        <taxon>Enterobacteriaceae</taxon>
        <taxon>Klebsiella/Raoultella group</taxon>
        <taxon>Klebsiella</taxon>
        <taxon>Klebsiella pneumoniae complex</taxon>
    </lineage>
</organism>
<feature type="chain" id="PRO_1000187511" description="Chromosome partition protein MukF">
    <location>
        <begin position="1"/>
        <end position="440"/>
    </location>
</feature>
<feature type="region of interest" description="Leucine-zipper">
    <location>
        <begin position="208"/>
        <end position="236"/>
    </location>
</feature>
<protein>
    <recommendedName>
        <fullName evidence="1">Chromosome partition protein MukF</fullName>
    </recommendedName>
</protein>